<organism>
    <name type="scientific">Rhinolophus ferrumequinum</name>
    <name type="common">Greater horseshoe bat</name>
    <dbReference type="NCBI Taxonomy" id="59479"/>
    <lineage>
        <taxon>Eukaryota</taxon>
        <taxon>Metazoa</taxon>
        <taxon>Chordata</taxon>
        <taxon>Craniata</taxon>
        <taxon>Vertebrata</taxon>
        <taxon>Euteleostomi</taxon>
        <taxon>Mammalia</taxon>
        <taxon>Eutheria</taxon>
        <taxon>Laurasiatheria</taxon>
        <taxon>Chiroptera</taxon>
        <taxon>Yinpterochiroptera</taxon>
        <taxon>Rhinolophoidea</taxon>
        <taxon>Rhinolophidae</taxon>
        <taxon>Rhinolophinae</taxon>
        <taxon>Rhinolophus</taxon>
    </lineage>
</organism>
<feature type="signal peptide" evidence="5">
    <location>
        <begin position="1"/>
        <end position="25"/>
    </location>
</feature>
<feature type="propeptide" id="PRO_0000375875" evidence="1">
    <location>
        <begin position="26"/>
        <end position="159"/>
    </location>
</feature>
<feature type="chain" id="PRO_0000375876" description="Cadherin-2">
    <location>
        <begin position="160"/>
        <end position="906"/>
    </location>
</feature>
<feature type="topological domain" description="Extracellular" evidence="5">
    <location>
        <begin position="160"/>
        <end position="724"/>
    </location>
</feature>
<feature type="transmembrane region" description="Helical" evidence="5">
    <location>
        <begin position="725"/>
        <end position="745"/>
    </location>
</feature>
<feature type="topological domain" description="Cytoplasmic" evidence="5">
    <location>
        <begin position="746"/>
        <end position="906"/>
    </location>
</feature>
<feature type="domain" description="Cadherin 1" evidence="6">
    <location>
        <begin position="160"/>
        <end position="267"/>
    </location>
</feature>
<feature type="domain" description="Cadherin 2" evidence="6">
    <location>
        <begin position="268"/>
        <end position="382"/>
    </location>
</feature>
<feature type="domain" description="Cadherin 3" evidence="6">
    <location>
        <begin position="383"/>
        <end position="497"/>
    </location>
</feature>
<feature type="domain" description="Cadherin 4" evidence="6">
    <location>
        <begin position="498"/>
        <end position="603"/>
    </location>
</feature>
<feature type="domain" description="Cadherin 5" evidence="6">
    <location>
        <begin position="604"/>
        <end position="714"/>
    </location>
</feature>
<feature type="region of interest" description="Disordered" evidence="7">
    <location>
        <begin position="863"/>
        <end position="884"/>
    </location>
</feature>
<feature type="compositionally biased region" description="Low complexity" evidence="7">
    <location>
        <begin position="863"/>
        <end position="880"/>
    </location>
</feature>
<feature type="binding site" evidence="2">
    <location>
        <position position="170"/>
    </location>
    <ligand>
        <name>Ca(2+)</name>
        <dbReference type="ChEBI" id="CHEBI:29108"/>
        <label>1</label>
    </ligand>
</feature>
<feature type="binding site" evidence="2">
    <location>
        <position position="170"/>
    </location>
    <ligand>
        <name>Ca(2+)</name>
        <dbReference type="ChEBI" id="CHEBI:29108"/>
        <label>2</label>
    </ligand>
</feature>
<feature type="binding site" evidence="2">
    <location>
        <position position="226"/>
    </location>
    <ligand>
        <name>Ca(2+)</name>
        <dbReference type="ChEBI" id="CHEBI:29108"/>
        <label>1</label>
    </ligand>
</feature>
<feature type="binding site" evidence="2">
    <location>
        <position position="228"/>
    </location>
    <ligand>
        <name>Ca(2+)</name>
        <dbReference type="ChEBI" id="CHEBI:29108"/>
        <label>1</label>
    </ligand>
</feature>
<feature type="binding site" evidence="2">
    <location>
        <position position="228"/>
    </location>
    <ligand>
        <name>Ca(2+)</name>
        <dbReference type="ChEBI" id="CHEBI:29108"/>
        <label>2</label>
    </ligand>
</feature>
<feature type="binding site" evidence="2">
    <location>
        <position position="259"/>
    </location>
    <ligand>
        <name>Ca(2+)</name>
        <dbReference type="ChEBI" id="CHEBI:29108"/>
        <label>2</label>
    </ligand>
</feature>
<feature type="binding site" evidence="2">
    <location>
        <position position="260"/>
    </location>
    <ligand>
        <name>Ca(2+)</name>
        <dbReference type="ChEBI" id="CHEBI:29108"/>
        <label>2</label>
    </ligand>
</feature>
<feature type="binding site" evidence="2">
    <location>
        <position position="261"/>
    </location>
    <ligand>
        <name>Ca(2+)</name>
        <dbReference type="ChEBI" id="CHEBI:29108"/>
        <label>3</label>
    </ligand>
</feature>
<feature type="binding site" evidence="2">
    <location>
        <position position="262"/>
    </location>
    <ligand>
        <name>Ca(2+)</name>
        <dbReference type="ChEBI" id="CHEBI:29108"/>
        <label>1</label>
    </ligand>
</feature>
<feature type="binding site" evidence="2">
    <location>
        <position position="262"/>
    </location>
    <ligand>
        <name>Ca(2+)</name>
        <dbReference type="ChEBI" id="CHEBI:29108"/>
        <label>2</label>
    </ligand>
</feature>
<feature type="binding site" evidence="2">
    <location>
        <position position="263"/>
    </location>
    <ligand>
        <name>Ca(2+)</name>
        <dbReference type="ChEBI" id="CHEBI:29108"/>
        <label>3</label>
    </ligand>
</feature>
<feature type="binding site" evidence="2">
    <location>
        <position position="293"/>
    </location>
    <ligand>
        <name>Ca(2+)</name>
        <dbReference type="ChEBI" id="CHEBI:29108"/>
        <label>3</label>
    </ligand>
</feature>
<feature type="binding site" evidence="2">
    <location>
        <position position="295"/>
    </location>
    <ligand>
        <name>Ca(2+)</name>
        <dbReference type="ChEBI" id="CHEBI:29108"/>
        <label>2</label>
    </ligand>
</feature>
<feature type="binding site" evidence="2">
    <location>
        <position position="301"/>
    </location>
    <ligand>
        <name>Ca(2+)</name>
        <dbReference type="ChEBI" id="CHEBI:29108"/>
        <label>3</label>
    </ligand>
</feature>
<feature type="binding site" evidence="2">
    <location>
        <position position="353"/>
    </location>
    <ligand>
        <name>Ca(2+)</name>
        <dbReference type="ChEBI" id="CHEBI:29108"/>
        <label>3</label>
    </ligand>
</feature>
<feature type="modified residue" description="Phosphoserine" evidence="3">
    <location>
        <position position="96"/>
    </location>
</feature>
<feature type="modified residue" description="Phosphoserine" evidence="3">
    <location>
        <position position="135"/>
    </location>
</feature>
<feature type="glycosylation site" description="N-linked (GlcNAc...) asparagine" evidence="5">
    <location>
        <position position="190"/>
    </location>
</feature>
<feature type="glycosylation site" description="N-linked (GlcNAc...) asparagine" evidence="5">
    <location>
        <position position="273"/>
    </location>
</feature>
<feature type="glycosylation site" description="N-linked (GlcNAc...) asparagine" evidence="5">
    <location>
        <position position="325"/>
    </location>
</feature>
<feature type="glycosylation site" description="N-linked (GlcNAc...) asparagine" evidence="5">
    <location>
        <position position="402"/>
    </location>
</feature>
<feature type="glycosylation site" description="N-linked (GlcNAc...) asparagine" evidence="5">
    <location>
        <position position="572"/>
    </location>
</feature>
<feature type="glycosylation site" description="N-linked (GlcNAc...) asparagine" evidence="5">
    <location>
        <position position="622"/>
    </location>
</feature>
<feature type="glycosylation site" description="N-linked (GlcNAc...) asparagine" evidence="5">
    <location>
        <position position="651"/>
    </location>
</feature>
<feature type="glycosylation site" description="N-linked (GlcNAc...) asparagine" evidence="5">
    <location>
        <position position="692"/>
    </location>
</feature>
<reference key="1">
    <citation type="submission" date="2008-04" db="EMBL/GenBank/DDBJ databases">
        <title>NISC comparative sequencing initiative.</title>
        <authorList>
            <person name="Antonellis A."/>
            <person name="Benjamin B."/>
            <person name="Blakesley R.W."/>
            <person name="Bouffard G.G."/>
            <person name="Brinkley C."/>
            <person name="Brooks S."/>
            <person name="Chu G."/>
            <person name="Chub I."/>
            <person name="Coleman H."/>
            <person name="Fuksenko T."/>
            <person name="Gestole M."/>
            <person name="Gregory M."/>
            <person name="Guan X."/>
            <person name="Gupta J."/>
            <person name="Gurson N."/>
            <person name="Han E."/>
            <person name="Han J."/>
            <person name="Hansen N."/>
            <person name="Hargrove A."/>
            <person name="Hines-Harris K."/>
            <person name="Ho S.-L."/>
            <person name="Hu P."/>
            <person name="Hunter G."/>
            <person name="Hurle B."/>
            <person name="Idol J.R."/>
            <person name="Johnson T."/>
            <person name="Knight E."/>
            <person name="Kwong P."/>
            <person name="Lee-Lin S.-Q."/>
            <person name="Legaspi R."/>
            <person name="Madden M."/>
            <person name="Maduro Q.L."/>
            <person name="Maduro V.B."/>
            <person name="Margulies E.H."/>
            <person name="Masiello C."/>
            <person name="Maskeri B."/>
            <person name="McDowell J."/>
            <person name="Merkulov G."/>
            <person name="Montemayor C."/>
            <person name="Mullikin J.C."/>
            <person name="Park M."/>
            <person name="Prasad A."/>
            <person name="Ramsahoye C."/>
            <person name="Reddix-Dugue N."/>
            <person name="Riebow N."/>
            <person name="Schandler K."/>
            <person name="Schueler M.G."/>
            <person name="Sison C."/>
            <person name="Smith L."/>
            <person name="Stantripop S."/>
            <person name="Thomas J.W."/>
            <person name="Thomas P.J."/>
            <person name="Tsipouri V."/>
            <person name="Young A."/>
            <person name="Green E.D."/>
        </authorList>
    </citation>
    <scope>NUCLEOTIDE SEQUENCE [LARGE SCALE GENOMIC DNA]</scope>
</reference>
<gene>
    <name type="primary">CDH2</name>
</gene>
<name>CADH2_RHIFE</name>
<keyword id="KW-0106">Calcium</keyword>
<keyword id="KW-0130">Cell adhesion</keyword>
<keyword id="KW-0965">Cell junction</keyword>
<keyword id="KW-1003">Cell membrane</keyword>
<keyword id="KW-0165">Cleavage on pair of basic residues</keyword>
<keyword id="KW-0325">Glycoprotein</keyword>
<keyword id="KW-0472">Membrane</keyword>
<keyword id="KW-0479">Metal-binding</keyword>
<keyword id="KW-0597">Phosphoprotein</keyword>
<keyword id="KW-1185">Reference proteome</keyword>
<keyword id="KW-0677">Repeat</keyword>
<keyword id="KW-0732">Signal</keyword>
<keyword id="KW-0812">Transmembrane</keyword>
<keyword id="KW-1133">Transmembrane helix</keyword>
<comment type="function">
    <text evidence="2">Calcium-dependent cell adhesion protein; preferentially mediates homotypic cell-cell adhesion by dimerization with a CDH2 chain from another cell. Cadherins may thus contribute to the sorting of heterogeneous cell types. Acts as a regulator of neural stem cells quiescence by mediating anchorage of neural stem cells to ependymocytes in the adult subependymal zone: upon cleavage by MMP24, CDH2-mediated anchorage is affected, leading to modulate neural stem cell quiescence. Plays a role in cell-to-cell junction formation between pancreatic beta cells and neural crest stem (NCS) cells, promoting the formation of processes by NCS cells (By similarity). CDH2 may be involved in neuronal recognition mechanism. In hippocampal neurons, may regulate dendritic spine density.</text>
</comment>
<comment type="subunit">
    <text evidence="2 3 4">Homodimer (via extracellular region). Can also form heterodimers with other cadherins (via extracellular region). Dimerization occurs in trans, i.e. with a cadherin chain from another cell (By similarity). Interacts with CDCP1 (By similarity). Interacts with PCDH8; this complex may also include TAOK2 (By similarity). The interaction with PCDH8 may lead to internalization through TAOK2/p38 MAPK pathway (By similarity). Identified in a complex containing FGFR4, NCAM1, CDH2, PLCG1, FRS2, SRC, SHC1, GAP43 and CTTN. May interact with OBSCN (via protein kinase domain 2) (By similarity). Interacts with FBXO45 (By similarity).</text>
</comment>
<comment type="subcellular location">
    <subcellularLocation>
        <location evidence="2">Cell membrane</location>
        <topology evidence="5">Single-pass type I membrane protein</topology>
    </subcellularLocation>
    <subcellularLocation>
        <location evidence="2">Cell membrane</location>
        <location evidence="2">Sarcolemma</location>
    </subcellularLocation>
    <subcellularLocation>
        <location evidence="2">Cell junction</location>
    </subcellularLocation>
    <subcellularLocation>
        <location evidence="2">Cell surface</location>
    </subcellularLocation>
    <subcellularLocation>
        <location evidence="2">Cell junction</location>
        <location evidence="2">Desmosome</location>
    </subcellularLocation>
    <subcellularLocation>
        <location evidence="2">Cell junction</location>
        <location evidence="2">Adherens junction</location>
    </subcellularLocation>
    <text evidence="2">Colocalizes with TMEM65 at the intercalated disk in cardiomyocytes (By similarity). Colocalizes with OBSCN at the intercalated disk and sarcolemma in cardiomyocytes (By similarity).</text>
</comment>
<comment type="domain">
    <text evidence="2">Three calcium ions are usually bound at the interface of each cadherin domain and rigidify the connections, imparting a strong curvature to the full-length ectodomain. Calcium-binding sites are occupied sequentially in the order of site 3, then site 2 and site 1.</text>
</comment>
<comment type="PTM">
    <text evidence="2">Cleaved by MMP24. Ectodomain cleavage leads to the generation of a soluble 90 kDa N-terminal soluble fragment and a 45 kDa membrane-bound C-terminal fragment 1 (CTF1), which is further cleaved by gamma-secretase into a 35 kDa. Cleavage in neural stem cells by MMP24 affects CDH2-mediated anchorage of neural stem cells to ependymocytes in the adult subependymal zone, leading to modulate neural stem cell quiescence.</text>
</comment>
<comment type="PTM">
    <text evidence="2">May be phosphorylated by OBSCN.</text>
</comment>
<accession>B2KI42</accession>
<dbReference type="EMBL" id="DP000706">
    <property type="protein sequence ID" value="ACC62497.1"/>
    <property type="molecule type" value="Genomic_DNA"/>
</dbReference>
<dbReference type="SMR" id="B2KI42"/>
<dbReference type="FunCoup" id="B2KI42">
    <property type="interactions" value="584"/>
</dbReference>
<dbReference type="GlyCosmos" id="B2KI42">
    <property type="glycosylation" value="8 sites, No reported glycans"/>
</dbReference>
<dbReference type="InParanoid" id="B2KI42"/>
<dbReference type="Proteomes" id="UP000472240">
    <property type="component" value="Unplaced"/>
</dbReference>
<dbReference type="GO" id="GO:0005912">
    <property type="term" value="C:adherens junction"/>
    <property type="evidence" value="ECO:0000250"/>
    <property type="project" value="UniProtKB"/>
</dbReference>
<dbReference type="GO" id="GO:0045177">
    <property type="term" value="C:apical part of cell"/>
    <property type="evidence" value="ECO:0007669"/>
    <property type="project" value="TreeGrafter"/>
</dbReference>
<dbReference type="GO" id="GO:0016342">
    <property type="term" value="C:catenin complex"/>
    <property type="evidence" value="ECO:0007669"/>
    <property type="project" value="TreeGrafter"/>
</dbReference>
<dbReference type="GO" id="GO:0009986">
    <property type="term" value="C:cell surface"/>
    <property type="evidence" value="ECO:0007669"/>
    <property type="project" value="UniProtKB-SubCell"/>
</dbReference>
<dbReference type="GO" id="GO:0005911">
    <property type="term" value="C:cell-cell junction"/>
    <property type="evidence" value="ECO:0000250"/>
    <property type="project" value="UniProtKB"/>
</dbReference>
<dbReference type="GO" id="GO:0005737">
    <property type="term" value="C:cytoplasm"/>
    <property type="evidence" value="ECO:0007669"/>
    <property type="project" value="TreeGrafter"/>
</dbReference>
<dbReference type="GO" id="GO:0030057">
    <property type="term" value="C:desmosome"/>
    <property type="evidence" value="ECO:0000250"/>
    <property type="project" value="UniProtKB"/>
</dbReference>
<dbReference type="GO" id="GO:0014704">
    <property type="term" value="C:intercalated disc"/>
    <property type="evidence" value="ECO:0000250"/>
    <property type="project" value="UniProtKB"/>
</dbReference>
<dbReference type="GO" id="GO:0030027">
    <property type="term" value="C:lamellipodium"/>
    <property type="evidence" value="ECO:0007669"/>
    <property type="project" value="TreeGrafter"/>
</dbReference>
<dbReference type="GO" id="GO:0043005">
    <property type="term" value="C:neuron projection"/>
    <property type="evidence" value="ECO:0007669"/>
    <property type="project" value="TreeGrafter"/>
</dbReference>
<dbReference type="GO" id="GO:0005886">
    <property type="term" value="C:plasma membrane"/>
    <property type="evidence" value="ECO:0000250"/>
    <property type="project" value="UniProtKB"/>
</dbReference>
<dbReference type="GO" id="GO:0014069">
    <property type="term" value="C:postsynaptic density"/>
    <property type="evidence" value="ECO:0007669"/>
    <property type="project" value="TreeGrafter"/>
</dbReference>
<dbReference type="GO" id="GO:0099634">
    <property type="term" value="C:postsynaptic specialization membrane"/>
    <property type="evidence" value="ECO:0007669"/>
    <property type="project" value="TreeGrafter"/>
</dbReference>
<dbReference type="GO" id="GO:0048787">
    <property type="term" value="C:presynaptic active zone membrane"/>
    <property type="evidence" value="ECO:0007669"/>
    <property type="project" value="TreeGrafter"/>
</dbReference>
<dbReference type="GO" id="GO:0042383">
    <property type="term" value="C:sarcolemma"/>
    <property type="evidence" value="ECO:0007669"/>
    <property type="project" value="UniProtKB-SubCell"/>
</dbReference>
<dbReference type="GO" id="GO:0008013">
    <property type="term" value="F:beta-catenin binding"/>
    <property type="evidence" value="ECO:0007669"/>
    <property type="project" value="TreeGrafter"/>
</dbReference>
<dbReference type="GO" id="GO:0045296">
    <property type="term" value="F:cadherin binding"/>
    <property type="evidence" value="ECO:0007669"/>
    <property type="project" value="TreeGrafter"/>
</dbReference>
<dbReference type="GO" id="GO:0005509">
    <property type="term" value="F:calcium ion binding"/>
    <property type="evidence" value="ECO:0000250"/>
    <property type="project" value="UniProtKB"/>
</dbReference>
<dbReference type="GO" id="GO:0034332">
    <property type="term" value="P:adherens junction organization"/>
    <property type="evidence" value="ECO:0007669"/>
    <property type="project" value="TreeGrafter"/>
</dbReference>
<dbReference type="GO" id="GO:0016339">
    <property type="term" value="P:calcium-dependent cell-cell adhesion via plasma membrane cell adhesion molecules"/>
    <property type="evidence" value="ECO:0007669"/>
    <property type="project" value="TreeGrafter"/>
</dbReference>
<dbReference type="GO" id="GO:0016477">
    <property type="term" value="P:cell migration"/>
    <property type="evidence" value="ECO:0007669"/>
    <property type="project" value="TreeGrafter"/>
</dbReference>
<dbReference type="GO" id="GO:0000902">
    <property type="term" value="P:cell morphogenesis"/>
    <property type="evidence" value="ECO:0007669"/>
    <property type="project" value="TreeGrafter"/>
</dbReference>
<dbReference type="GO" id="GO:0098609">
    <property type="term" value="P:cell-cell adhesion"/>
    <property type="evidence" value="ECO:0000250"/>
    <property type="project" value="UniProtKB"/>
</dbReference>
<dbReference type="GO" id="GO:0044331">
    <property type="term" value="P:cell-cell adhesion mediated by cadherin"/>
    <property type="evidence" value="ECO:0000250"/>
    <property type="project" value="UniProtKB"/>
</dbReference>
<dbReference type="GO" id="GO:0007043">
    <property type="term" value="P:cell-cell junction assembly"/>
    <property type="evidence" value="ECO:0000250"/>
    <property type="project" value="UniProtKB"/>
</dbReference>
<dbReference type="GO" id="GO:0010001">
    <property type="term" value="P:glial cell differentiation"/>
    <property type="evidence" value="ECO:0000250"/>
    <property type="project" value="UniProtKB"/>
</dbReference>
<dbReference type="GO" id="GO:0007156">
    <property type="term" value="P:homophilic cell adhesion via plasma membrane adhesion molecules"/>
    <property type="evidence" value="ECO:0007669"/>
    <property type="project" value="InterPro"/>
</dbReference>
<dbReference type="GO" id="GO:0014032">
    <property type="term" value="P:neural crest cell development"/>
    <property type="evidence" value="ECO:0000250"/>
    <property type="project" value="UniProtKB"/>
</dbReference>
<dbReference type="GO" id="GO:0097150">
    <property type="term" value="P:neuronal stem cell population maintenance"/>
    <property type="evidence" value="ECO:0000250"/>
    <property type="project" value="UniProtKB"/>
</dbReference>
<dbReference type="GO" id="GO:0007416">
    <property type="term" value="P:synapse assembly"/>
    <property type="evidence" value="ECO:0007669"/>
    <property type="project" value="TreeGrafter"/>
</dbReference>
<dbReference type="GO" id="GO:0003323">
    <property type="term" value="P:type B pancreatic cell development"/>
    <property type="evidence" value="ECO:0000250"/>
    <property type="project" value="UniProtKB"/>
</dbReference>
<dbReference type="CDD" id="cd11304">
    <property type="entry name" value="Cadherin_repeat"/>
    <property type="match status" value="3"/>
</dbReference>
<dbReference type="FunFam" id="2.60.40.60:FF:000011">
    <property type="entry name" value="Cadherin 1"/>
    <property type="match status" value="1"/>
</dbReference>
<dbReference type="FunFam" id="2.60.40.60:FF:000019">
    <property type="entry name" value="Cadherin 2"/>
    <property type="match status" value="1"/>
</dbReference>
<dbReference type="FunFam" id="2.60.40.60:FF:000022">
    <property type="entry name" value="Cadherin 2"/>
    <property type="match status" value="1"/>
</dbReference>
<dbReference type="FunFam" id="2.60.40.60:FF:000027">
    <property type="entry name" value="Cadherin 2"/>
    <property type="match status" value="1"/>
</dbReference>
<dbReference type="FunFam" id="2.60.40.60:FF:000045">
    <property type="entry name" value="Cadherin 2"/>
    <property type="match status" value="1"/>
</dbReference>
<dbReference type="FunFam" id="4.10.900.10:FF:000001">
    <property type="entry name" value="Cadherin 2"/>
    <property type="match status" value="1"/>
</dbReference>
<dbReference type="FunFam" id="2.60.40.60:FF:000139">
    <property type="entry name" value="Cadherin-2 preproprotein"/>
    <property type="match status" value="1"/>
</dbReference>
<dbReference type="Gene3D" id="2.60.40.60">
    <property type="entry name" value="Cadherins"/>
    <property type="match status" value="6"/>
</dbReference>
<dbReference type="Gene3D" id="4.10.900.10">
    <property type="entry name" value="TCF3-CBD (Catenin binding domain)"/>
    <property type="match status" value="1"/>
</dbReference>
<dbReference type="InterPro" id="IPR039808">
    <property type="entry name" value="Cadherin"/>
</dbReference>
<dbReference type="InterPro" id="IPR002126">
    <property type="entry name" value="Cadherin-like_dom"/>
</dbReference>
<dbReference type="InterPro" id="IPR015919">
    <property type="entry name" value="Cadherin-like_sf"/>
</dbReference>
<dbReference type="InterPro" id="IPR020894">
    <property type="entry name" value="Cadherin_CS"/>
</dbReference>
<dbReference type="InterPro" id="IPR014868">
    <property type="entry name" value="Cadherin_pro_dom"/>
</dbReference>
<dbReference type="InterPro" id="IPR000233">
    <property type="entry name" value="Cadherin_Y-type_LIR"/>
</dbReference>
<dbReference type="InterPro" id="IPR027397">
    <property type="entry name" value="Catenin-bd_sf"/>
</dbReference>
<dbReference type="PANTHER" id="PTHR24027:SF79">
    <property type="entry name" value="CADHERIN-2"/>
    <property type="match status" value="1"/>
</dbReference>
<dbReference type="PANTHER" id="PTHR24027">
    <property type="entry name" value="CADHERIN-23"/>
    <property type="match status" value="1"/>
</dbReference>
<dbReference type="Pfam" id="PF01049">
    <property type="entry name" value="CADH_Y-type_LIR"/>
    <property type="match status" value="1"/>
</dbReference>
<dbReference type="Pfam" id="PF00028">
    <property type="entry name" value="Cadherin"/>
    <property type="match status" value="5"/>
</dbReference>
<dbReference type="Pfam" id="PF08758">
    <property type="entry name" value="Cadherin_pro"/>
    <property type="match status" value="1"/>
</dbReference>
<dbReference type="PRINTS" id="PR00205">
    <property type="entry name" value="CADHERIN"/>
</dbReference>
<dbReference type="PRINTS" id="PR01820">
    <property type="entry name" value="DESMOCOLLIN"/>
</dbReference>
<dbReference type="SMART" id="SM00112">
    <property type="entry name" value="CA"/>
    <property type="match status" value="5"/>
</dbReference>
<dbReference type="SMART" id="SM01055">
    <property type="entry name" value="Cadherin_pro"/>
    <property type="match status" value="1"/>
</dbReference>
<dbReference type="SUPFAM" id="SSF49313">
    <property type="entry name" value="Cadherin-like"/>
    <property type="match status" value="6"/>
</dbReference>
<dbReference type="PROSITE" id="PS00232">
    <property type="entry name" value="CADHERIN_1"/>
    <property type="match status" value="3"/>
</dbReference>
<dbReference type="PROSITE" id="PS50268">
    <property type="entry name" value="CADHERIN_2"/>
    <property type="match status" value="5"/>
</dbReference>
<sequence>MCRIVGAPRTLLPLLAALLQASVEASGGIALCKTGFPEDVYSAVLSQDVHEGQPLLNVKFSNCNGKRKVQYESSEPADFKVDEDGMVYAVRSFPLSSEHAKFLIYAQDKETQEKWQVAVKLSLKPNLPEDSVKESQEIEEIVFPRQLMKHNGHLQRQKRDWVIPPINLPENSRGPFPQELVRIRSDRDKNLSLRYSVTGPGADQPPTGIFIINPISGQLSVTKPLDRELIARFHLRAHAVDINGNQVENPIDIVINVIDMNDNRPEFLHQVWNGTVPEGSKPGTYVMTVTAIDDDDPNTLNGMLRYRILSQAPSTPSPNMFTINNETGDIITVAAGLDREKVQQYMLIIQATDTEGSPTYGLSNTATAVITVTDVNDNPPEFTAMSFYGEVPENRVDVIVANLTVTDKDQPHTPAWNAVYRISGGDPTGRFAIQTDPNSNDGLVTVVKPIDFETNRMFVLTVAAENQVPLAKGIQHPPQSTATVSVTVIDVNENPYFAPNPKIIRQEEGLHAGTMLTTFTAQDPDRYMPQNIRYTKLSDPANWLKIDPVNGQITTIAVLDRESPNVKNNIYNATFLASDNGIPPMSGTGTLQIYLLDINDNAPQVVPQEAETCETPDPNSINITALDYDIDPNAGPFAFDLPLSPVTIKRNWTITRLNGDFAQLNLKIKFLEAGIYEVPIIITDSGNPPKSNISILRVKVCQCDSNGDCTDVDRIVGAGLGTGAIIAILLCIIILLILVLMFVVWMKRRDKERQAKQLLIDPEDDVRDNILKYDEEGGGEEDQDYDLSQLQQPDTVEPDAIKPVGIRRLDERPIHAEPQYPVRSAAPHPGDIGDFINEGLKAADNDPTAPPYDSLLVFDYEGSGSTAGSLSSLNSSSSGGEQDYDYLNDWGPRFKKLADMYGGGDD</sequence>
<evidence type="ECO:0000250" key="1"/>
<evidence type="ECO:0000250" key="2">
    <source>
        <dbReference type="UniProtKB" id="P15116"/>
    </source>
</evidence>
<evidence type="ECO:0000250" key="3">
    <source>
        <dbReference type="UniProtKB" id="P19022"/>
    </source>
</evidence>
<evidence type="ECO:0000250" key="4">
    <source>
        <dbReference type="UniProtKB" id="Q9Z1Y3"/>
    </source>
</evidence>
<evidence type="ECO:0000255" key="5"/>
<evidence type="ECO:0000255" key="6">
    <source>
        <dbReference type="PROSITE-ProRule" id="PRU00043"/>
    </source>
</evidence>
<evidence type="ECO:0000256" key="7">
    <source>
        <dbReference type="SAM" id="MobiDB-lite"/>
    </source>
</evidence>
<protein>
    <recommendedName>
        <fullName>Cadherin-2</fullName>
    </recommendedName>
    <alternativeName>
        <fullName>Neural cadherin</fullName>
        <shortName>N-cadherin</shortName>
    </alternativeName>
    <cdAntigenName>CD325</cdAntigenName>
</protein>
<proteinExistence type="inferred from homology"/>